<gene>
    <name evidence="1" type="primary">atpD</name>
    <name type="ordered locus">Mmcs_3876</name>
</gene>
<sequence length="509" mass="55353">MTAATEQKEKTGTDNVGRVVRVTGPVVDVEFPRGSVPELFNALHAEISYKDLAKTLTLEVAQHLGDSLVRCISMQPTDGLVRGVDVTDTGASISVPVGEGVKGHVFNALGACLDDPGYGKDFEKWSIHRKPPAFDELEPRTEMLETGLKVVDLLTPYVRGGKIALFGGAGVGKTVLIQEMINRIARNFGGTSVFAGVGERTREGNDLWVELADANVLKDTALVFGQMDEPPGTRMRVALSALTMAEYFRDEKQQDVLLFIDNIFRFTQAGSEVSTLLGRMPSAVGYQPTLADEMGELQERITSTRGRSITSMQAVYVPADDYTDPAPATTFAHLDATTELSRSVFSKGIFPAVDPLASSSTILDPSVVGDEHYRVAQEVIRILQRYKDLQDIIAILGIDELAEEDKQLVQRARRIERFLSQNMMAAEQFTGQPGSTVPLKETIEAFDKLSKGDFDHLPEQAFFLIGGLEDLQRKAESLGAKMEDTSGDGAPAQSDSKSDSKGDDADKDA</sequence>
<keyword id="KW-0066">ATP synthesis</keyword>
<keyword id="KW-0067">ATP-binding</keyword>
<keyword id="KW-1003">Cell membrane</keyword>
<keyword id="KW-0139">CF(1)</keyword>
<keyword id="KW-0375">Hydrogen ion transport</keyword>
<keyword id="KW-0406">Ion transport</keyword>
<keyword id="KW-0472">Membrane</keyword>
<keyword id="KW-0547">Nucleotide-binding</keyword>
<keyword id="KW-1278">Translocase</keyword>
<keyword id="KW-0813">Transport</keyword>
<dbReference type="EC" id="7.1.2.2" evidence="1"/>
<dbReference type="EMBL" id="CP000384">
    <property type="protein sequence ID" value="ABG09981.1"/>
    <property type="molecule type" value="Genomic_DNA"/>
</dbReference>
<dbReference type="SMR" id="Q1B553"/>
<dbReference type="KEGG" id="mmc:Mmcs_3876"/>
<dbReference type="HOGENOM" id="CLU_022398_0_2_11"/>
<dbReference type="BioCyc" id="MSP164756:G1G6O-3960-MONOMER"/>
<dbReference type="GO" id="GO:0005886">
    <property type="term" value="C:plasma membrane"/>
    <property type="evidence" value="ECO:0007669"/>
    <property type="project" value="UniProtKB-SubCell"/>
</dbReference>
<dbReference type="GO" id="GO:0045259">
    <property type="term" value="C:proton-transporting ATP synthase complex"/>
    <property type="evidence" value="ECO:0007669"/>
    <property type="project" value="UniProtKB-KW"/>
</dbReference>
<dbReference type="GO" id="GO:0005524">
    <property type="term" value="F:ATP binding"/>
    <property type="evidence" value="ECO:0007669"/>
    <property type="project" value="UniProtKB-UniRule"/>
</dbReference>
<dbReference type="GO" id="GO:0016887">
    <property type="term" value="F:ATP hydrolysis activity"/>
    <property type="evidence" value="ECO:0007669"/>
    <property type="project" value="InterPro"/>
</dbReference>
<dbReference type="GO" id="GO:0046933">
    <property type="term" value="F:proton-transporting ATP synthase activity, rotational mechanism"/>
    <property type="evidence" value="ECO:0007669"/>
    <property type="project" value="UniProtKB-UniRule"/>
</dbReference>
<dbReference type="CDD" id="cd18110">
    <property type="entry name" value="ATP-synt_F1_beta_C"/>
    <property type="match status" value="1"/>
</dbReference>
<dbReference type="CDD" id="cd18115">
    <property type="entry name" value="ATP-synt_F1_beta_N"/>
    <property type="match status" value="1"/>
</dbReference>
<dbReference type="CDD" id="cd01133">
    <property type="entry name" value="F1-ATPase_beta_CD"/>
    <property type="match status" value="1"/>
</dbReference>
<dbReference type="FunFam" id="1.10.1140.10:FF:000001">
    <property type="entry name" value="ATP synthase subunit beta"/>
    <property type="match status" value="1"/>
</dbReference>
<dbReference type="FunFam" id="2.40.10.170:FF:000005">
    <property type="entry name" value="ATP synthase subunit beta"/>
    <property type="match status" value="1"/>
</dbReference>
<dbReference type="FunFam" id="3.40.50.300:FF:000004">
    <property type="entry name" value="ATP synthase subunit beta"/>
    <property type="match status" value="1"/>
</dbReference>
<dbReference type="Gene3D" id="2.40.10.170">
    <property type="match status" value="1"/>
</dbReference>
<dbReference type="Gene3D" id="1.10.1140.10">
    <property type="entry name" value="Bovine Mitochondrial F1-atpase, Atp Synthase Beta Chain, Chain D, domain 3"/>
    <property type="match status" value="1"/>
</dbReference>
<dbReference type="Gene3D" id="3.40.50.300">
    <property type="entry name" value="P-loop containing nucleotide triphosphate hydrolases"/>
    <property type="match status" value="1"/>
</dbReference>
<dbReference type="HAMAP" id="MF_01347">
    <property type="entry name" value="ATP_synth_beta_bact"/>
    <property type="match status" value="1"/>
</dbReference>
<dbReference type="InterPro" id="IPR003593">
    <property type="entry name" value="AAA+_ATPase"/>
</dbReference>
<dbReference type="InterPro" id="IPR055190">
    <property type="entry name" value="ATP-synt_VA_C"/>
</dbReference>
<dbReference type="InterPro" id="IPR005722">
    <property type="entry name" value="ATP_synth_F1_bsu"/>
</dbReference>
<dbReference type="InterPro" id="IPR020003">
    <property type="entry name" value="ATPase_a/bsu_AS"/>
</dbReference>
<dbReference type="InterPro" id="IPR050053">
    <property type="entry name" value="ATPase_alpha/beta_chains"/>
</dbReference>
<dbReference type="InterPro" id="IPR004100">
    <property type="entry name" value="ATPase_F1/V1/A1_a/bsu_N"/>
</dbReference>
<dbReference type="InterPro" id="IPR036121">
    <property type="entry name" value="ATPase_F1/V1/A1_a/bsu_N_sf"/>
</dbReference>
<dbReference type="InterPro" id="IPR000194">
    <property type="entry name" value="ATPase_F1/V1/A1_a/bsu_nucl-bd"/>
</dbReference>
<dbReference type="InterPro" id="IPR024034">
    <property type="entry name" value="ATPase_F1/V1_b/a_C"/>
</dbReference>
<dbReference type="InterPro" id="IPR027417">
    <property type="entry name" value="P-loop_NTPase"/>
</dbReference>
<dbReference type="NCBIfam" id="TIGR01039">
    <property type="entry name" value="atpD"/>
    <property type="match status" value="1"/>
</dbReference>
<dbReference type="PANTHER" id="PTHR15184">
    <property type="entry name" value="ATP SYNTHASE"/>
    <property type="match status" value="1"/>
</dbReference>
<dbReference type="PANTHER" id="PTHR15184:SF71">
    <property type="entry name" value="ATP SYNTHASE SUBUNIT BETA, MITOCHONDRIAL"/>
    <property type="match status" value="1"/>
</dbReference>
<dbReference type="Pfam" id="PF00006">
    <property type="entry name" value="ATP-synt_ab"/>
    <property type="match status" value="1"/>
</dbReference>
<dbReference type="Pfam" id="PF02874">
    <property type="entry name" value="ATP-synt_ab_N"/>
    <property type="match status" value="1"/>
</dbReference>
<dbReference type="Pfam" id="PF22919">
    <property type="entry name" value="ATP-synt_VA_C"/>
    <property type="match status" value="1"/>
</dbReference>
<dbReference type="SMART" id="SM00382">
    <property type="entry name" value="AAA"/>
    <property type="match status" value="1"/>
</dbReference>
<dbReference type="SUPFAM" id="SSF47917">
    <property type="entry name" value="C-terminal domain of alpha and beta subunits of F1 ATP synthase"/>
    <property type="match status" value="1"/>
</dbReference>
<dbReference type="SUPFAM" id="SSF50615">
    <property type="entry name" value="N-terminal domain of alpha and beta subunits of F1 ATP synthase"/>
    <property type="match status" value="1"/>
</dbReference>
<dbReference type="SUPFAM" id="SSF52540">
    <property type="entry name" value="P-loop containing nucleoside triphosphate hydrolases"/>
    <property type="match status" value="1"/>
</dbReference>
<dbReference type="PROSITE" id="PS00152">
    <property type="entry name" value="ATPASE_ALPHA_BETA"/>
    <property type="match status" value="1"/>
</dbReference>
<reference key="1">
    <citation type="submission" date="2006-06" db="EMBL/GenBank/DDBJ databases">
        <title>Complete sequence of chromosome of Mycobacterium sp. MCS.</title>
        <authorList>
            <consortium name="US DOE Joint Genome Institute"/>
            <person name="Copeland A."/>
            <person name="Lucas S."/>
            <person name="Lapidus A."/>
            <person name="Barry K."/>
            <person name="Detter J.C."/>
            <person name="Glavina del Rio T."/>
            <person name="Hammon N."/>
            <person name="Israni S."/>
            <person name="Dalin E."/>
            <person name="Tice H."/>
            <person name="Pitluck S."/>
            <person name="Martinez M."/>
            <person name="Schmutz J."/>
            <person name="Larimer F."/>
            <person name="Land M."/>
            <person name="Hauser L."/>
            <person name="Kyrpides N."/>
            <person name="Kim E."/>
            <person name="Miller C.D."/>
            <person name="Hughes J.E."/>
            <person name="Anderson A.J."/>
            <person name="Sims R.C."/>
            <person name="Richardson P."/>
        </authorList>
    </citation>
    <scope>NUCLEOTIDE SEQUENCE [LARGE SCALE GENOMIC DNA]</scope>
    <source>
        <strain>MCS</strain>
    </source>
</reference>
<evidence type="ECO:0000255" key="1">
    <source>
        <dbReference type="HAMAP-Rule" id="MF_01347"/>
    </source>
</evidence>
<evidence type="ECO:0000256" key="2">
    <source>
        <dbReference type="SAM" id="MobiDB-lite"/>
    </source>
</evidence>
<organism>
    <name type="scientific">Mycobacterium sp. (strain MCS)</name>
    <dbReference type="NCBI Taxonomy" id="164756"/>
    <lineage>
        <taxon>Bacteria</taxon>
        <taxon>Bacillati</taxon>
        <taxon>Actinomycetota</taxon>
        <taxon>Actinomycetes</taxon>
        <taxon>Mycobacteriales</taxon>
        <taxon>Mycobacteriaceae</taxon>
        <taxon>Mycobacterium</taxon>
    </lineage>
</organism>
<feature type="chain" id="PRO_0000339552" description="ATP synthase subunit beta">
    <location>
        <begin position="1"/>
        <end position="509"/>
    </location>
</feature>
<feature type="region of interest" description="Disordered" evidence="2">
    <location>
        <begin position="476"/>
        <end position="509"/>
    </location>
</feature>
<feature type="compositionally biased region" description="Basic and acidic residues" evidence="2">
    <location>
        <begin position="496"/>
        <end position="509"/>
    </location>
</feature>
<feature type="binding site" evidence="1">
    <location>
        <begin position="167"/>
        <end position="174"/>
    </location>
    <ligand>
        <name>ATP</name>
        <dbReference type="ChEBI" id="CHEBI:30616"/>
    </ligand>
</feature>
<name>ATPB_MYCSS</name>
<accession>Q1B553</accession>
<proteinExistence type="inferred from homology"/>
<protein>
    <recommendedName>
        <fullName evidence="1">ATP synthase subunit beta</fullName>
        <ecNumber evidence="1">7.1.2.2</ecNumber>
    </recommendedName>
    <alternativeName>
        <fullName evidence="1">ATP synthase F1 sector subunit beta</fullName>
    </alternativeName>
    <alternativeName>
        <fullName evidence="1">F-ATPase subunit beta</fullName>
    </alternativeName>
</protein>
<comment type="function">
    <text evidence="1">Produces ATP from ADP in the presence of a proton gradient across the membrane. The catalytic sites are hosted primarily by the beta subunits.</text>
</comment>
<comment type="catalytic activity">
    <reaction evidence="1">
        <text>ATP + H2O + 4 H(+)(in) = ADP + phosphate + 5 H(+)(out)</text>
        <dbReference type="Rhea" id="RHEA:57720"/>
        <dbReference type="ChEBI" id="CHEBI:15377"/>
        <dbReference type="ChEBI" id="CHEBI:15378"/>
        <dbReference type="ChEBI" id="CHEBI:30616"/>
        <dbReference type="ChEBI" id="CHEBI:43474"/>
        <dbReference type="ChEBI" id="CHEBI:456216"/>
        <dbReference type="EC" id="7.1.2.2"/>
    </reaction>
</comment>
<comment type="subunit">
    <text evidence="1">F-type ATPases have 2 components, CF(1) - the catalytic core - and CF(0) - the membrane proton channel. CF(1) has five subunits: alpha(3), beta(3), gamma(1), delta(1), epsilon(1). CF(0) has three main subunits: a(1), b(2) and c(9-12). The alpha and beta chains form an alternating ring which encloses part of the gamma chain. CF(1) is attached to CF(0) by a central stalk formed by the gamma and epsilon chains, while a peripheral stalk is formed by the delta and b chains.</text>
</comment>
<comment type="subcellular location">
    <subcellularLocation>
        <location evidence="1">Cell membrane</location>
        <topology evidence="1">Peripheral membrane protein</topology>
    </subcellularLocation>
</comment>
<comment type="similarity">
    <text evidence="1">Belongs to the ATPase alpha/beta chains family.</text>
</comment>